<accession>A7MX60</accession>
<reference key="1">
    <citation type="submission" date="2007-08" db="EMBL/GenBank/DDBJ databases">
        <authorList>
            <consortium name="The Vibrio harveyi Genome Sequencing Project"/>
            <person name="Bassler B."/>
            <person name="Clifton S.W."/>
            <person name="Fulton L."/>
            <person name="Delehaunty K."/>
            <person name="Fronick C."/>
            <person name="Harrison M."/>
            <person name="Markivic C."/>
            <person name="Fulton R."/>
            <person name="Tin-Wollam A.-M."/>
            <person name="Shah N."/>
            <person name="Pepin K."/>
            <person name="Nash W."/>
            <person name="Thiruvilangam P."/>
            <person name="Bhonagiri V."/>
            <person name="Waters C."/>
            <person name="Tu K.C."/>
            <person name="Irgon J."/>
            <person name="Wilson R.K."/>
        </authorList>
    </citation>
    <scope>NUCLEOTIDE SEQUENCE [LARGE SCALE GENOMIC DNA]</scope>
    <source>
        <strain>ATCC BAA-1116 / BB120</strain>
    </source>
</reference>
<sequence>MTQANTNNAYGKDIAMTVIGAGSYGTSLAISLARNGANVILWGHEPEHMARLEADRANHEFLPGIDFPESLIIESDLEKAVQASRDLLVVVPSHVFGIVLNSCKPFLREDSRICWATKGLEPETGRLLKEVAFDIIGDSYSLAVLSGPTFAKELAMGMPTAISVASPDSAFVADLQEKIHCSKTFRVYANNDFIGMQLGGAVKNVIAIGAGMSDGIGFGANARTALITRGLAEMSRLGAALGAQPETFMGMAGLGDLVLTCTDNQSRNRRFGLALGQGKDVDTAQEEIGQVVEGYRNTKEVWMLSQRMGVEMPIVDQIYQVLYQGKDARLAAQDLLARDKKAEGK</sequence>
<gene>
    <name evidence="1" type="primary">gpsA</name>
    <name type="ordered locus">VIBHAR_00124</name>
</gene>
<name>GPDA_VIBC1</name>
<keyword id="KW-0963">Cytoplasm</keyword>
<keyword id="KW-0444">Lipid biosynthesis</keyword>
<keyword id="KW-0443">Lipid metabolism</keyword>
<keyword id="KW-0520">NAD</keyword>
<keyword id="KW-0521">NADP</keyword>
<keyword id="KW-0547">Nucleotide-binding</keyword>
<keyword id="KW-0560">Oxidoreductase</keyword>
<keyword id="KW-0594">Phospholipid biosynthesis</keyword>
<keyword id="KW-1208">Phospholipid metabolism</keyword>
<organism>
    <name type="scientific">Vibrio campbellii (strain ATCC BAA-1116)</name>
    <dbReference type="NCBI Taxonomy" id="2902295"/>
    <lineage>
        <taxon>Bacteria</taxon>
        <taxon>Pseudomonadati</taxon>
        <taxon>Pseudomonadota</taxon>
        <taxon>Gammaproteobacteria</taxon>
        <taxon>Vibrionales</taxon>
        <taxon>Vibrionaceae</taxon>
        <taxon>Vibrio</taxon>
    </lineage>
</organism>
<evidence type="ECO:0000255" key="1">
    <source>
        <dbReference type="HAMAP-Rule" id="MF_00394"/>
    </source>
</evidence>
<proteinExistence type="inferred from homology"/>
<comment type="function">
    <text evidence="1">Catalyzes the reduction of the glycolytic intermediate dihydroxyacetone phosphate (DHAP) to sn-glycerol 3-phosphate (G3P), the key precursor for phospholipid synthesis.</text>
</comment>
<comment type="catalytic activity">
    <reaction evidence="1">
        <text>sn-glycerol 3-phosphate + NAD(+) = dihydroxyacetone phosphate + NADH + H(+)</text>
        <dbReference type="Rhea" id="RHEA:11092"/>
        <dbReference type="ChEBI" id="CHEBI:15378"/>
        <dbReference type="ChEBI" id="CHEBI:57540"/>
        <dbReference type="ChEBI" id="CHEBI:57597"/>
        <dbReference type="ChEBI" id="CHEBI:57642"/>
        <dbReference type="ChEBI" id="CHEBI:57945"/>
        <dbReference type="EC" id="1.1.1.94"/>
    </reaction>
    <physiologicalReaction direction="right-to-left" evidence="1">
        <dbReference type="Rhea" id="RHEA:11094"/>
    </physiologicalReaction>
</comment>
<comment type="catalytic activity">
    <reaction evidence="1">
        <text>sn-glycerol 3-phosphate + NADP(+) = dihydroxyacetone phosphate + NADPH + H(+)</text>
        <dbReference type="Rhea" id="RHEA:11096"/>
        <dbReference type="ChEBI" id="CHEBI:15378"/>
        <dbReference type="ChEBI" id="CHEBI:57597"/>
        <dbReference type="ChEBI" id="CHEBI:57642"/>
        <dbReference type="ChEBI" id="CHEBI:57783"/>
        <dbReference type="ChEBI" id="CHEBI:58349"/>
        <dbReference type="EC" id="1.1.1.94"/>
    </reaction>
    <physiologicalReaction direction="right-to-left" evidence="1">
        <dbReference type="Rhea" id="RHEA:11098"/>
    </physiologicalReaction>
</comment>
<comment type="pathway">
    <text evidence="1">Membrane lipid metabolism; glycerophospholipid metabolism.</text>
</comment>
<comment type="subcellular location">
    <subcellularLocation>
        <location evidence="1">Cytoplasm</location>
    </subcellularLocation>
</comment>
<comment type="similarity">
    <text evidence="1">Belongs to the NAD-dependent glycerol-3-phosphate dehydrogenase family.</text>
</comment>
<dbReference type="EC" id="1.1.1.94" evidence="1"/>
<dbReference type="EMBL" id="CP000789">
    <property type="protein sequence ID" value="ABU69172.1"/>
    <property type="molecule type" value="Genomic_DNA"/>
</dbReference>
<dbReference type="RefSeq" id="WP_005425056.1">
    <property type="nucleotide sequence ID" value="NC_022269.1"/>
</dbReference>
<dbReference type="SMR" id="A7MX60"/>
<dbReference type="KEGG" id="vha:VIBHAR_00124"/>
<dbReference type="PATRIC" id="fig|338187.25.peg.2409"/>
<dbReference type="UniPathway" id="UPA00940"/>
<dbReference type="Proteomes" id="UP000008152">
    <property type="component" value="Chromosome I"/>
</dbReference>
<dbReference type="GO" id="GO:0005829">
    <property type="term" value="C:cytosol"/>
    <property type="evidence" value="ECO:0007669"/>
    <property type="project" value="TreeGrafter"/>
</dbReference>
<dbReference type="GO" id="GO:0047952">
    <property type="term" value="F:glycerol-3-phosphate dehydrogenase [NAD(P)+] activity"/>
    <property type="evidence" value="ECO:0007669"/>
    <property type="project" value="UniProtKB-UniRule"/>
</dbReference>
<dbReference type="GO" id="GO:0051287">
    <property type="term" value="F:NAD binding"/>
    <property type="evidence" value="ECO:0007669"/>
    <property type="project" value="InterPro"/>
</dbReference>
<dbReference type="GO" id="GO:0005975">
    <property type="term" value="P:carbohydrate metabolic process"/>
    <property type="evidence" value="ECO:0007669"/>
    <property type="project" value="InterPro"/>
</dbReference>
<dbReference type="GO" id="GO:0046167">
    <property type="term" value="P:glycerol-3-phosphate biosynthetic process"/>
    <property type="evidence" value="ECO:0007669"/>
    <property type="project" value="UniProtKB-UniRule"/>
</dbReference>
<dbReference type="GO" id="GO:0046168">
    <property type="term" value="P:glycerol-3-phosphate catabolic process"/>
    <property type="evidence" value="ECO:0007669"/>
    <property type="project" value="InterPro"/>
</dbReference>
<dbReference type="GO" id="GO:0046474">
    <property type="term" value="P:glycerophospholipid biosynthetic process"/>
    <property type="evidence" value="ECO:0007669"/>
    <property type="project" value="TreeGrafter"/>
</dbReference>
<dbReference type="FunFam" id="1.10.1040.10:FF:000001">
    <property type="entry name" value="Glycerol-3-phosphate dehydrogenase [NAD(P)+]"/>
    <property type="match status" value="1"/>
</dbReference>
<dbReference type="FunFam" id="3.40.50.720:FF:000019">
    <property type="entry name" value="Glycerol-3-phosphate dehydrogenase [NAD(P)+]"/>
    <property type="match status" value="1"/>
</dbReference>
<dbReference type="Gene3D" id="1.10.1040.10">
    <property type="entry name" value="N-(1-d-carboxylethyl)-l-norvaline Dehydrogenase, domain 2"/>
    <property type="match status" value="1"/>
</dbReference>
<dbReference type="Gene3D" id="3.40.50.720">
    <property type="entry name" value="NAD(P)-binding Rossmann-like Domain"/>
    <property type="match status" value="1"/>
</dbReference>
<dbReference type="HAMAP" id="MF_00394">
    <property type="entry name" value="NAD_Glyc3P_dehydrog"/>
    <property type="match status" value="1"/>
</dbReference>
<dbReference type="InterPro" id="IPR008927">
    <property type="entry name" value="6-PGluconate_DH-like_C_sf"/>
</dbReference>
<dbReference type="InterPro" id="IPR013328">
    <property type="entry name" value="6PGD_dom2"/>
</dbReference>
<dbReference type="InterPro" id="IPR006168">
    <property type="entry name" value="G3P_DH_NAD-dep"/>
</dbReference>
<dbReference type="InterPro" id="IPR006109">
    <property type="entry name" value="G3P_DH_NAD-dep_C"/>
</dbReference>
<dbReference type="InterPro" id="IPR011128">
    <property type="entry name" value="G3P_DH_NAD-dep_N"/>
</dbReference>
<dbReference type="InterPro" id="IPR036291">
    <property type="entry name" value="NAD(P)-bd_dom_sf"/>
</dbReference>
<dbReference type="NCBIfam" id="NF000939">
    <property type="entry name" value="PRK00094.1-1"/>
    <property type="match status" value="1"/>
</dbReference>
<dbReference type="NCBIfam" id="NF000940">
    <property type="entry name" value="PRK00094.1-2"/>
    <property type="match status" value="1"/>
</dbReference>
<dbReference type="NCBIfam" id="NF000942">
    <property type="entry name" value="PRK00094.1-4"/>
    <property type="match status" value="1"/>
</dbReference>
<dbReference type="PANTHER" id="PTHR11728">
    <property type="entry name" value="GLYCEROL-3-PHOSPHATE DEHYDROGENASE"/>
    <property type="match status" value="1"/>
</dbReference>
<dbReference type="PANTHER" id="PTHR11728:SF1">
    <property type="entry name" value="GLYCEROL-3-PHOSPHATE DEHYDROGENASE [NAD(+)] 2, CHLOROPLASTIC"/>
    <property type="match status" value="1"/>
</dbReference>
<dbReference type="Pfam" id="PF07479">
    <property type="entry name" value="NAD_Gly3P_dh_C"/>
    <property type="match status" value="1"/>
</dbReference>
<dbReference type="Pfam" id="PF01210">
    <property type="entry name" value="NAD_Gly3P_dh_N"/>
    <property type="match status" value="1"/>
</dbReference>
<dbReference type="PIRSF" id="PIRSF000114">
    <property type="entry name" value="Glycerol-3-P_dh"/>
    <property type="match status" value="1"/>
</dbReference>
<dbReference type="PRINTS" id="PR00077">
    <property type="entry name" value="GPDHDRGNASE"/>
</dbReference>
<dbReference type="SUPFAM" id="SSF48179">
    <property type="entry name" value="6-phosphogluconate dehydrogenase C-terminal domain-like"/>
    <property type="match status" value="1"/>
</dbReference>
<dbReference type="SUPFAM" id="SSF51735">
    <property type="entry name" value="NAD(P)-binding Rossmann-fold domains"/>
    <property type="match status" value="1"/>
</dbReference>
<dbReference type="PROSITE" id="PS00957">
    <property type="entry name" value="NAD_G3PDH"/>
    <property type="match status" value="1"/>
</dbReference>
<protein>
    <recommendedName>
        <fullName evidence="1">Glycerol-3-phosphate dehydrogenase [NAD(P)+]</fullName>
        <ecNumber evidence="1">1.1.1.94</ecNumber>
    </recommendedName>
    <alternativeName>
        <fullName evidence="1">NAD(P)(+)-dependent glycerol-3-phosphate dehydrogenase</fullName>
    </alternativeName>
    <alternativeName>
        <fullName evidence="1">NAD(P)H-dependent dihydroxyacetone-phosphate reductase</fullName>
    </alternativeName>
</protein>
<feature type="chain" id="PRO_1000049568" description="Glycerol-3-phosphate dehydrogenase [NAD(P)+]">
    <location>
        <begin position="1"/>
        <end position="345"/>
    </location>
</feature>
<feature type="active site" description="Proton acceptor" evidence="1">
    <location>
        <position position="203"/>
    </location>
</feature>
<feature type="binding site" evidence="1">
    <location>
        <position position="23"/>
    </location>
    <ligand>
        <name>NADPH</name>
        <dbReference type="ChEBI" id="CHEBI:57783"/>
    </ligand>
</feature>
<feature type="binding site" evidence="1">
    <location>
        <position position="24"/>
    </location>
    <ligand>
        <name>NADPH</name>
        <dbReference type="ChEBI" id="CHEBI:57783"/>
    </ligand>
</feature>
<feature type="binding site" evidence="1">
    <location>
        <position position="44"/>
    </location>
    <ligand>
        <name>NADPH</name>
        <dbReference type="ChEBI" id="CHEBI:57783"/>
    </ligand>
</feature>
<feature type="binding site" evidence="1">
    <location>
        <position position="118"/>
    </location>
    <ligand>
        <name>NADPH</name>
        <dbReference type="ChEBI" id="CHEBI:57783"/>
    </ligand>
</feature>
<feature type="binding site" evidence="1">
    <location>
        <position position="118"/>
    </location>
    <ligand>
        <name>sn-glycerol 3-phosphate</name>
        <dbReference type="ChEBI" id="CHEBI:57597"/>
    </ligand>
</feature>
<feature type="binding site" evidence="1">
    <location>
        <position position="147"/>
    </location>
    <ligand>
        <name>sn-glycerol 3-phosphate</name>
        <dbReference type="ChEBI" id="CHEBI:57597"/>
    </ligand>
</feature>
<feature type="binding site" evidence="1">
    <location>
        <position position="149"/>
    </location>
    <ligand>
        <name>sn-glycerol 3-phosphate</name>
        <dbReference type="ChEBI" id="CHEBI:57597"/>
    </ligand>
</feature>
<feature type="binding site" evidence="1">
    <location>
        <position position="151"/>
    </location>
    <ligand>
        <name>NADPH</name>
        <dbReference type="ChEBI" id="CHEBI:57783"/>
    </ligand>
</feature>
<feature type="binding site" evidence="1">
    <location>
        <position position="203"/>
    </location>
    <ligand>
        <name>sn-glycerol 3-phosphate</name>
        <dbReference type="ChEBI" id="CHEBI:57597"/>
    </ligand>
</feature>
<feature type="binding site" evidence="1">
    <location>
        <position position="256"/>
    </location>
    <ligand>
        <name>sn-glycerol 3-phosphate</name>
        <dbReference type="ChEBI" id="CHEBI:57597"/>
    </ligand>
</feature>
<feature type="binding site" evidence="1">
    <location>
        <position position="266"/>
    </location>
    <ligand>
        <name>sn-glycerol 3-phosphate</name>
        <dbReference type="ChEBI" id="CHEBI:57597"/>
    </ligand>
</feature>
<feature type="binding site" evidence="1">
    <location>
        <position position="267"/>
    </location>
    <ligand>
        <name>NADPH</name>
        <dbReference type="ChEBI" id="CHEBI:57783"/>
    </ligand>
</feature>
<feature type="binding site" evidence="1">
    <location>
        <position position="267"/>
    </location>
    <ligand>
        <name>sn-glycerol 3-phosphate</name>
        <dbReference type="ChEBI" id="CHEBI:57597"/>
    </ligand>
</feature>
<feature type="binding site" evidence="1">
    <location>
        <position position="268"/>
    </location>
    <ligand>
        <name>sn-glycerol 3-phosphate</name>
        <dbReference type="ChEBI" id="CHEBI:57597"/>
    </ligand>
</feature>
<feature type="binding site" evidence="1">
    <location>
        <position position="291"/>
    </location>
    <ligand>
        <name>NADPH</name>
        <dbReference type="ChEBI" id="CHEBI:57783"/>
    </ligand>
</feature>
<feature type="binding site" evidence="1">
    <location>
        <position position="293"/>
    </location>
    <ligand>
        <name>NADPH</name>
        <dbReference type="ChEBI" id="CHEBI:57783"/>
    </ligand>
</feature>